<reference key="1">
    <citation type="submission" date="1997-07" db="EMBL/GenBank/DDBJ databases">
        <title>JA2: a DEAH family RNA-helicase-like gene from Saccharomyces cerevisiae.</title>
        <authorList>
            <person name="Arenas J.E."/>
            <person name="Messenger J."/>
        </authorList>
    </citation>
    <scope>NUCLEOTIDE SEQUENCE [GENOMIC DNA]</scope>
</reference>
<reference key="2">
    <citation type="submission" date="1993-11" db="EMBL/GenBank/DDBJ databases">
        <title>A clone isolated from a Clontech HeLa cDNA library has high homology to yeast DEAH helicases and hybridizes to Northern and Southern blots from yeast but not from HeLa.</title>
        <authorList>
            <person name="Raju V.S."/>
            <person name="Datta P.K."/>
            <person name="Beales M.H."/>
            <person name="Ghoshal K."/>
            <person name="Jacob S.T."/>
        </authorList>
    </citation>
    <scope>NUCLEOTIDE SEQUENCE [GENOMIC DNA]</scope>
</reference>
<reference key="3">
    <citation type="journal article" date="1994" name="Yeast">
        <title>Sequence analysis of a 10 kb fragment of yeast chromosome XI identifies the SMY1 locus and reveals sequences related to a pre-mRNA splicing factor and vacuolar ATPase subunit C plus a number of unidentified open reading frames.</title>
        <authorList>
            <person name="James C.M."/>
            <person name="Gent M.E."/>
            <person name="Indge K.J."/>
            <person name="Oliver S.G."/>
        </authorList>
    </citation>
    <scope>NUCLEOTIDE SEQUENCE [GENOMIC DNA]</scope>
</reference>
<reference key="4">
    <citation type="journal article" date="1994" name="Nature">
        <title>Complete DNA sequence of yeast chromosome XI.</title>
        <authorList>
            <person name="Dujon B."/>
            <person name="Alexandraki D."/>
            <person name="Andre B."/>
            <person name="Ansorge W."/>
            <person name="Baladron V."/>
            <person name="Ballesta J.P.G."/>
            <person name="Banrevi A."/>
            <person name="Bolle P.-A."/>
            <person name="Bolotin-Fukuhara M."/>
            <person name="Bossier P."/>
            <person name="Bou G."/>
            <person name="Boyer J."/>
            <person name="Buitrago M.J."/>
            <person name="Cheret G."/>
            <person name="Colleaux L."/>
            <person name="Daignan-Fornier B."/>
            <person name="del Rey F."/>
            <person name="Dion C."/>
            <person name="Domdey H."/>
            <person name="Duesterhoeft A."/>
            <person name="Duesterhus S."/>
            <person name="Entian K.-D."/>
            <person name="Erfle H."/>
            <person name="Esteban P.F."/>
            <person name="Feldmann H."/>
            <person name="Fernandes L."/>
            <person name="Fobo G.M."/>
            <person name="Fritz C."/>
            <person name="Fukuhara H."/>
            <person name="Gabel C."/>
            <person name="Gaillon L."/>
            <person name="Garcia-Cantalejo J.M."/>
            <person name="Garcia-Ramirez J.J."/>
            <person name="Gent M.E."/>
            <person name="Ghazvini M."/>
            <person name="Goffeau A."/>
            <person name="Gonzalez A."/>
            <person name="Grothues D."/>
            <person name="Guerreiro P."/>
            <person name="Hegemann J.H."/>
            <person name="Hewitt N."/>
            <person name="Hilger F."/>
            <person name="Hollenberg C.P."/>
            <person name="Horaitis O."/>
            <person name="Indge K.J."/>
            <person name="Jacquier A."/>
            <person name="James C.M."/>
            <person name="Jauniaux J.-C."/>
            <person name="Jimenez A."/>
            <person name="Keuchel H."/>
            <person name="Kirchrath L."/>
            <person name="Kleine K."/>
            <person name="Koetter P."/>
            <person name="Legrain P."/>
            <person name="Liebl S."/>
            <person name="Louis E.J."/>
            <person name="Maia e Silva A."/>
            <person name="Marck C."/>
            <person name="Monnier A.-L."/>
            <person name="Moestl D."/>
            <person name="Mueller S."/>
            <person name="Obermaier B."/>
            <person name="Oliver S.G."/>
            <person name="Pallier C."/>
            <person name="Pascolo S."/>
            <person name="Pfeiffer F."/>
            <person name="Philippsen P."/>
            <person name="Planta R.J."/>
            <person name="Pohl F.M."/>
            <person name="Pohl T.M."/>
            <person name="Poehlmann R."/>
            <person name="Portetelle D."/>
            <person name="Purnelle B."/>
            <person name="Puzos V."/>
            <person name="Ramezani Rad M."/>
            <person name="Rasmussen S.W."/>
            <person name="Remacha M.A."/>
            <person name="Revuelta J.L."/>
            <person name="Richard G.-F."/>
            <person name="Rieger M."/>
            <person name="Rodrigues-Pousada C."/>
            <person name="Rose M."/>
            <person name="Rupp T."/>
            <person name="Santos M.A."/>
            <person name="Schwager C."/>
            <person name="Sensen C."/>
            <person name="Skala J."/>
            <person name="Soares H."/>
            <person name="Sor F."/>
            <person name="Stegemann J."/>
            <person name="Tettelin H."/>
            <person name="Thierry A."/>
            <person name="Tzermia M."/>
            <person name="Urrestarazu L.A."/>
            <person name="van Dyck L."/>
            <person name="van Vliet-Reedijk J.C."/>
            <person name="Valens M."/>
            <person name="Vandenbol M."/>
            <person name="Vilela C."/>
            <person name="Vissers S."/>
            <person name="von Wettstein D."/>
            <person name="Voss H."/>
            <person name="Wiemann S."/>
            <person name="Xu G."/>
            <person name="Zimmermann J."/>
            <person name="Haasemann M."/>
            <person name="Becker I."/>
            <person name="Mewes H.-W."/>
        </authorList>
    </citation>
    <scope>NUCLEOTIDE SEQUENCE [LARGE SCALE GENOMIC DNA]</scope>
    <source>
        <strain>ATCC 204508 / S288c</strain>
    </source>
</reference>
<reference key="5">
    <citation type="journal article" date="2014" name="G3 (Bethesda)">
        <title>The reference genome sequence of Saccharomyces cerevisiae: Then and now.</title>
        <authorList>
            <person name="Engel S.R."/>
            <person name="Dietrich F.S."/>
            <person name="Fisk D.G."/>
            <person name="Binkley G."/>
            <person name="Balakrishnan R."/>
            <person name="Costanzo M.C."/>
            <person name="Dwight S.S."/>
            <person name="Hitz B.C."/>
            <person name="Karra K."/>
            <person name="Nash R.S."/>
            <person name="Weng S."/>
            <person name="Wong E.D."/>
            <person name="Lloyd P."/>
            <person name="Skrzypek M.S."/>
            <person name="Miyasato S.R."/>
            <person name="Simison M."/>
            <person name="Cherry J.M."/>
        </authorList>
    </citation>
    <scope>GENOME REANNOTATION</scope>
    <source>
        <strain>ATCC 204508 / S288c</strain>
    </source>
</reference>
<reference key="6">
    <citation type="journal article" date="2000" name="Mol. Cell. Biol.">
        <title>Dhr1p, a putative DEAH-Box RNA helicase, is associated with the box C+D snoRNP U3.</title>
        <authorList>
            <person name="Colley A."/>
            <person name="Beggs J.D."/>
            <person name="Tollervey D."/>
            <person name="Lafontaine D.L.J."/>
        </authorList>
    </citation>
    <scope>CHARACTERIZATION</scope>
</reference>
<reference key="7">
    <citation type="journal article" date="2003" name="Nature">
        <title>Global analysis of protein expression in yeast.</title>
        <authorList>
            <person name="Ghaemmaghami S."/>
            <person name="Huh W.-K."/>
            <person name="Bower K."/>
            <person name="Howson R.W."/>
            <person name="Belle A."/>
            <person name="Dephoure N."/>
            <person name="O'Shea E.K."/>
            <person name="Weissman J.S."/>
        </authorList>
    </citation>
    <scope>LEVEL OF PROTEIN EXPRESSION [LARGE SCALE ANALYSIS]</scope>
</reference>
<reference key="8">
    <citation type="journal article" date="2011" name="RNA Biol.">
        <title>The nucleolar protein Nop19p interacts preferentially with Utp25p and Dhr2p and is essential for the production of the 40S ribosomal subunit in Saccharomyces cerevisiae.</title>
        <authorList>
            <person name="Choque E."/>
            <person name="Marcellin M."/>
            <person name="Burlet-Schiltz O."/>
            <person name="Gadal O."/>
            <person name="Dez C."/>
        </authorList>
    </citation>
    <scope>INTERACTION WITH NOP19</scope>
</reference>
<reference key="9">
    <citation type="journal article" date="2012" name="Cell Rep.">
        <title>A conserved deubiquitinating enzyme controls cell growth by regulating RNA polymerase I stability.</title>
        <authorList>
            <person name="Richardson L.A."/>
            <person name="Reed B.J."/>
            <person name="Charette J.M."/>
            <person name="Freed E.F."/>
            <person name="Fredrickson E.K."/>
            <person name="Locke M.N."/>
            <person name="Baserga S.J."/>
            <person name="Gardner R.G."/>
        </authorList>
    </citation>
    <scope>INTERACTION WITH UBP10</scope>
</reference>
<reference key="10">
    <citation type="journal article" date="2015" name="J. Biol. Chem.">
        <title>A conserved deubiquitinating enzyme uses intrinsically disordered regions to scaffold multiple protein interaction sites.</title>
        <authorList>
            <person name="Reed B.J."/>
            <person name="Locke M.N."/>
            <person name="Gardner R.G."/>
        </authorList>
    </citation>
    <scope>INTERACTION WITH UBP10</scope>
</reference>
<protein>
    <recommendedName>
        <fullName>Probable ATP-dependent RNA helicase DHR2</fullName>
        <ecNumber>3.6.4.13</ecNumber>
    </recommendedName>
    <alternativeName>
        <fullName>DEAH box RNA helicase DHR2</fullName>
    </alternativeName>
    <alternativeName>
        <fullName>Helicase JA2</fullName>
    </alternativeName>
</protein>
<gene>
    <name type="primary">DHR2</name>
    <name type="ordered locus">YKL078W</name>
    <name type="ORF">YKL408</name>
</gene>
<feature type="chain" id="PRO_0000055163" description="Probable ATP-dependent RNA helicase DHR2">
    <location>
        <begin position="1"/>
        <end position="735"/>
    </location>
</feature>
<feature type="domain" description="Helicase ATP-binding" evidence="1">
    <location>
        <begin position="91"/>
        <end position="257"/>
    </location>
</feature>
<feature type="domain" description="Helicase C-terminal" evidence="2">
    <location>
        <begin position="262"/>
        <end position="456"/>
    </location>
</feature>
<feature type="region of interest" description="Disordered" evidence="3">
    <location>
        <begin position="1"/>
        <end position="29"/>
    </location>
</feature>
<feature type="short sequence motif" description="DEAH box">
    <location>
        <begin position="203"/>
        <end position="206"/>
    </location>
</feature>
<feature type="compositionally biased region" description="Polar residues" evidence="3">
    <location>
        <begin position="1"/>
        <end position="13"/>
    </location>
</feature>
<feature type="compositionally biased region" description="Basic residues" evidence="3">
    <location>
        <begin position="14"/>
        <end position="24"/>
    </location>
</feature>
<feature type="binding site" evidence="1">
    <location>
        <begin position="104"/>
        <end position="111"/>
    </location>
    <ligand>
        <name>ATP</name>
        <dbReference type="ChEBI" id="CHEBI:30616"/>
    </ligand>
</feature>
<feature type="sequence conflict" description="In Ref. 2; AAA34986." evidence="8" ref="2">
    <original>T</original>
    <variation>M</variation>
    <location>
        <position position="28"/>
    </location>
</feature>
<feature type="sequence conflict" description="In Ref. 2; AAA34986." evidence="8" ref="2">
    <original>TLPVYQHKREIMSYIESNP</original>
    <variation>HFRLPTQARNNVIYSKQS</variation>
    <location>
        <begin position="80"/>
        <end position="98"/>
    </location>
</feature>
<feature type="sequence conflict" description="In Ref. 2; AAA34986." evidence="8" ref="2">
    <original>DAVIRCCIQINQ</original>
    <variation>ALSSGVYTNKP</variation>
    <location>
        <begin position="277"/>
        <end position="288"/>
    </location>
</feature>
<feature type="sequence conflict" description="In Ref. 2; AAA34986." evidence="8" ref="2">
    <original>A</original>
    <variation>P</variation>
    <location>
        <position position="339"/>
    </location>
</feature>
<organism>
    <name type="scientific">Saccharomyces cerevisiae (strain ATCC 204508 / S288c)</name>
    <name type="common">Baker's yeast</name>
    <dbReference type="NCBI Taxonomy" id="559292"/>
    <lineage>
        <taxon>Eukaryota</taxon>
        <taxon>Fungi</taxon>
        <taxon>Dikarya</taxon>
        <taxon>Ascomycota</taxon>
        <taxon>Saccharomycotina</taxon>
        <taxon>Saccharomycetes</taxon>
        <taxon>Saccharomycetales</taxon>
        <taxon>Saccharomycetaceae</taxon>
        <taxon>Saccharomyces</taxon>
    </lineage>
</organism>
<dbReference type="EC" id="3.6.4.13"/>
<dbReference type="EMBL" id="AF005090">
    <property type="protein sequence ID" value="AAB61670.1"/>
    <property type="molecule type" value="Genomic_DNA"/>
</dbReference>
<dbReference type="EMBL" id="L15328">
    <property type="protein sequence ID" value="AAA34986.1"/>
    <property type="molecule type" value="Genomic_DNA"/>
</dbReference>
<dbReference type="EMBL" id="X75560">
    <property type="protein sequence ID" value="CAA53239.1"/>
    <property type="molecule type" value="Genomic_DNA"/>
</dbReference>
<dbReference type="EMBL" id="Z28078">
    <property type="protein sequence ID" value="CAA81915.1"/>
    <property type="molecule type" value="Genomic_DNA"/>
</dbReference>
<dbReference type="EMBL" id="BK006944">
    <property type="protein sequence ID" value="DAA09079.1"/>
    <property type="molecule type" value="Genomic_DNA"/>
</dbReference>
<dbReference type="PIR" id="S37903">
    <property type="entry name" value="S37903"/>
</dbReference>
<dbReference type="RefSeq" id="NP_012845.1">
    <property type="nucleotide sequence ID" value="NM_001179644.1"/>
</dbReference>
<dbReference type="SMR" id="P36009"/>
<dbReference type="BioGRID" id="34054">
    <property type="interactions" value="301"/>
</dbReference>
<dbReference type="DIP" id="DIP-6424N"/>
<dbReference type="FunCoup" id="P36009">
    <property type="interactions" value="260"/>
</dbReference>
<dbReference type="IntAct" id="P36009">
    <property type="interactions" value="45"/>
</dbReference>
<dbReference type="MINT" id="P36009"/>
<dbReference type="STRING" id="4932.YKL078W"/>
<dbReference type="iPTMnet" id="P36009"/>
<dbReference type="PaxDb" id="4932-YKL078W"/>
<dbReference type="PeptideAtlas" id="P36009"/>
<dbReference type="EnsemblFungi" id="YKL078W_mRNA">
    <property type="protein sequence ID" value="YKL078W"/>
    <property type="gene ID" value="YKL078W"/>
</dbReference>
<dbReference type="GeneID" id="853784"/>
<dbReference type="KEGG" id="sce:YKL078W"/>
<dbReference type="AGR" id="SGD:S000001561"/>
<dbReference type="SGD" id="S000001561">
    <property type="gene designation" value="DHR2"/>
</dbReference>
<dbReference type="VEuPathDB" id="FungiDB:YKL078W"/>
<dbReference type="eggNOG" id="KOG0922">
    <property type="taxonomic scope" value="Eukaryota"/>
</dbReference>
<dbReference type="GeneTree" id="ENSGT00940000156747"/>
<dbReference type="HOGENOM" id="CLU_001832_5_11_1"/>
<dbReference type="InParanoid" id="P36009"/>
<dbReference type="OMA" id="APVHDFV"/>
<dbReference type="OrthoDB" id="10253254at2759"/>
<dbReference type="BioCyc" id="YEAST:G3O-31873-MONOMER"/>
<dbReference type="BioGRID-ORCS" id="853784">
    <property type="hits" value="6 hits in 10 CRISPR screens"/>
</dbReference>
<dbReference type="PRO" id="PR:P36009"/>
<dbReference type="Proteomes" id="UP000002311">
    <property type="component" value="Chromosome XI"/>
</dbReference>
<dbReference type="RNAct" id="P36009">
    <property type="molecule type" value="protein"/>
</dbReference>
<dbReference type="GO" id="GO:0005730">
    <property type="term" value="C:nucleolus"/>
    <property type="evidence" value="ECO:0000314"/>
    <property type="project" value="SGD"/>
</dbReference>
<dbReference type="GO" id="GO:0005654">
    <property type="term" value="C:nucleoplasm"/>
    <property type="evidence" value="ECO:0000304"/>
    <property type="project" value="Reactome"/>
</dbReference>
<dbReference type="GO" id="GO:0032040">
    <property type="term" value="C:small-subunit processome"/>
    <property type="evidence" value="ECO:0000353"/>
    <property type="project" value="ComplexPortal"/>
</dbReference>
<dbReference type="GO" id="GO:0005524">
    <property type="term" value="F:ATP binding"/>
    <property type="evidence" value="ECO:0007669"/>
    <property type="project" value="UniProtKB-KW"/>
</dbReference>
<dbReference type="GO" id="GO:0016887">
    <property type="term" value="F:ATP hydrolysis activity"/>
    <property type="evidence" value="ECO:0007669"/>
    <property type="project" value="RHEA"/>
</dbReference>
<dbReference type="GO" id="GO:0003725">
    <property type="term" value="F:double-stranded RNA binding"/>
    <property type="evidence" value="ECO:0000318"/>
    <property type="project" value="GO_Central"/>
</dbReference>
<dbReference type="GO" id="GO:0004386">
    <property type="term" value="F:helicase activity"/>
    <property type="evidence" value="ECO:0000318"/>
    <property type="project" value="GO_Central"/>
</dbReference>
<dbReference type="GO" id="GO:0042802">
    <property type="term" value="F:identical protein binding"/>
    <property type="evidence" value="ECO:0000353"/>
    <property type="project" value="IntAct"/>
</dbReference>
<dbReference type="GO" id="GO:0003724">
    <property type="term" value="F:RNA helicase activity"/>
    <property type="evidence" value="ECO:0000314"/>
    <property type="project" value="SGD"/>
</dbReference>
<dbReference type="GO" id="GO:0030490">
    <property type="term" value="P:maturation of SSU-rRNA"/>
    <property type="evidence" value="ECO:0000303"/>
    <property type="project" value="ComplexPortal"/>
</dbReference>
<dbReference type="GO" id="GO:0000462">
    <property type="term" value="P:maturation of SSU-rRNA from tricistronic rRNA transcript (SSU-rRNA, 5.8S rRNA, LSU-rRNA)"/>
    <property type="evidence" value="ECO:0000315"/>
    <property type="project" value="SGD"/>
</dbReference>
<dbReference type="GO" id="GO:0045943">
    <property type="term" value="P:positive regulation of transcription by RNA polymerase I"/>
    <property type="evidence" value="ECO:0000318"/>
    <property type="project" value="GO_Central"/>
</dbReference>
<dbReference type="GO" id="GO:0042254">
    <property type="term" value="P:ribosome biogenesis"/>
    <property type="evidence" value="ECO:0000314"/>
    <property type="project" value="SGD"/>
</dbReference>
<dbReference type="CDD" id="cd17917">
    <property type="entry name" value="DEXHc_RHA-like"/>
    <property type="match status" value="1"/>
</dbReference>
<dbReference type="CDD" id="cd18791">
    <property type="entry name" value="SF2_C_RHA"/>
    <property type="match status" value="1"/>
</dbReference>
<dbReference type="FunFam" id="1.20.120.1080:FF:000028">
    <property type="entry name" value="ATP-dependent RNA helicase"/>
    <property type="match status" value="1"/>
</dbReference>
<dbReference type="FunFam" id="3.40.50.300:FF:002124">
    <property type="entry name" value="ATP-dependent RNA helicase"/>
    <property type="match status" value="1"/>
</dbReference>
<dbReference type="Gene3D" id="1.20.120.1080">
    <property type="match status" value="1"/>
</dbReference>
<dbReference type="Gene3D" id="3.40.50.300">
    <property type="entry name" value="P-loop containing nucleotide triphosphate hydrolases"/>
    <property type="match status" value="2"/>
</dbReference>
<dbReference type="InterPro" id="IPR011709">
    <property type="entry name" value="DEAD-box_helicase_OB_fold"/>
</dbReference>
<dbReference type="InterPro" id="IPR011545">
    <property type="entry name" value="DEAD/DEAH_box_helicase_dom"/>
</dbReference>
<dbReference type="InterPro" id="IPR002464">
    <property type="entry name" value="DNA/RNA_helicase_DEAH_CS"/>
</dbReference>
<dbReference type="InterPro" id="IPR048333">
    <property type="entry name" value="HA2_WH"/>
</dbReference>
<dbReference type="InterPro" id="IPR007502">
    <property type="entry name" value="Helicase-assoc_dom"/>
</dbReference>
<dbReference type="InterPro" id="IPR014001">
    <property type="entry name" value="Helicase_ATP-bd"/>
</dbReference>
<dbReference type="InterPro" id="IPR001650">
    <property type="entry name" value="Helicase_C-like"/>
</dbReference>
<dbReference type="InterPro" id="IPR027417">
    <property type="entry name" value="P-loop_NTPase"/>
</dbReference>
<dbReference type="PANTHER" id="PTHR18934">
    <property type="entry name" value="ATP-DEPENDENT RNA HELICASE"/>
    <property type="match status" value="1"/>
</dbReference>
<dbReference type="PANTHER" id="PTHR18934:SF118">
    <property type="entry name" value="ATP-DEPENDENT RNA HELICASE DHX33"/>
    <property type="match status" value="1"/>
</dbReference>
<dbReference type="Pfam" id="PF00270">
    <property type="entry name" value="DEAD"/>
    <property type="match status" value="1"/>
</dbReference>
<dbReference type="Pfam" id="PF21010">
    <property type="entry name" value="HA2_C"/>
    <property type="match status" value="1"/>
</dbReference>
<dbReference type="Pfam" id="PF04408">
    <property type="entry name" value="HA2_N"/>
    <property type="match status" value="1"/>
</dbReference>
<dbReference type="Pfam" id="PF00271">
    <property type="entry name" value="Helicase_C"/>
    <property type="match status" value="1"/>
</dbReference>
<dbReference type="Pfam" id="PF07717">
    <property type="entry name" value="OB_NTP_bind"/>
    <property type="match status" value="1"/>
</dbReference>
<dbReference type="SMART" id="SM00487">
    <property type="entry name" value="DEXDc"/>
    <property type="match status" value="1"/>
</dbReference>
<dbReference type="SMART" id="SM00847">
    <property type="entry name" value="HA2"/>
    <property type="match status" value="1"/>
</dbReference>
<dbReference type="SMART" id="SM00490">
    <property type="entry name" value="HELICc"/>
    <property type="match status" value="1"/>
</dbReference>
<dbReference type="SUPFAM" id="SSF52540">
    <property type="entry name" value="P-loop containing nucleoside triphosphate hydrolases"/>
    <property type="match status" value="1"/>
</dbReference>
<dbReference type="PROSITE" id="PS00690">
    <property type="entry name" value="DEAH_ATP_HELICASE"/>
    <property type="match status" value="1"/>
</dbReference>
<dbReference type="PROSITE" id="PS51192">
    <property type="entry name" value="HELICASE_ATP_BIND_1"/>
    <property type="match status" value="1"/>
</dbReference>
<dbReference type="PROSITE" id="PS51194">
    <property type="entry name" value="HELICASE_CTER"/>
    <property type="match status" value="1"/>
</dbReference>
<sequence length="735" mass="82713">MAANSNSRVASNHTSKKQKVRRNIHPFTNNTRIKRASKIVKFNDSGEGDHVSDQRSNKENVLTYKSLKSRASDLLKMRETLPVYQHKREIMSYIESNPVTVLIGETGSGKSTQIPQFVLEKLYDTKKHGSIAVTQPRRVAAINLATRVAQEHGCKLGEQVGYSVRFDNTTTTRTRLKYLTDGMLLRELMMNSDLREYSVIVIDEAHERTVLTDLILGFLKSLIQGPRPDLRIIVMSATLQAEKFSEFFNNAPILFVEGRKFDVKQYYLKAPTDDIVDAVIRCCIQINQGEELGDILCFLPGQEEIDKAVTIMEKIAKYVSDEAPVPLIVPYPLYAALPAVQQSLVFAPIKGFKRKVVFSTNIAETSVTISGVKFVVDSGLRKVKVWRHQLGLATLLTVPISQASAMQRSGRAGRESEGKSFRLYCESDYVKLPKQSEPEIARSDVTSPVLMLKRYGVDDLLNWTWFENPGKEAIVMGLQELYELGALDTRGKITKRGQQMALLPLQPHLSSVLIKASEVGCLSQVIDIVSCLSVENLLLNPSPEERDEVNERRLSLCNAGKRYGDLIMLKELFDIYFYELGKSQDASSERNDWCKGLCISIRGFKNVIRVRDQLRVYCKRLFSSISEEDEESKKIGEDGELISKILKCFLTGFIKNTAIGMPDRSYRTVSTGEPISIHPSSMLFMNKSCPGIMYTEYVFTTKGYARNVSRIELSWLQEVVTNAAAVAKQKVSDSK</sequence>
<evidence type="ECO:0000255" key="1">
    <source>
        <dbReference type="PROSITE-ProRule" id="PRU00541"/>
    </source>
</evidence>
<evidence type="ECO:0000255" key="2">
    <source>
        <dbReference type="PROSITE-ProRule" id="PRU00542"/>
    </source>
</evidence>
<evidence type="ECO:0000256" key="3">
    <source>
        <dbReference type="SAM" id="MobiDB-lite"/>
    </source>
</evidence>
<evidence type="ECO:0000269" key="4">
    <source>
    </source>
</evidence>
<evidence type="ECO:0000269" key="5">
    <source>
    </source>
</evidence>
<evidence type="ECO:0000269" key="6">
    <source>
    </source>
</evidence>
<evidence type="ECO:0000269" key="7">
    <source>
    </source>
</evidence>
<evidence type="ECO:0000305" key="8"/>
<accession>P36009</accession>
<accession>D6VXK9</accession>
<accession>Q07040</accession>
<comment type="function">
    <text>Probable ATP-binding RNA helicase. Required for 18S rRNA synthesis.</text>
</comment>
<comment type="catalytic activity">
    <reaction>
        <text>ATP + H2O = ADP + phosphate + H(+)</text>
        <dbReference type="Rhea" id="RHEA:13065"/>
        <dbReference type="ChEBI" id="CHEBI:15377"/>
        <dbReference type="ChEBI" id="CHEBI:15378"/>
        <dbReference type="ChEBI" id="CHEBI:30616"/>
        <dbReference type="ChEBI" id="CHEBI:43474"/>
        <dbReference type="ChEBI" id="CHEBI:456216"/>
        <dbReference type="EC" id="3.6.4.13"/>
    </reaction>
</comment>
<comment type="subunit">
    <text evidence="5 6 7">Interacts with NOP19 (PubMed:21941128). Interacts with UBP10 (PubMed:22902402, PubMed:26149687).</text>
</comment>
<comment type="interaction">
    <interactant intactId="EBI-5844">
        <id>P36009</id>
    </interactant>
    <interactant intactId="EBI-5633">
        <id>P38719</id>
        <label>DBP8</label>
    </interactant>
    <organismsDiffer>false</organismsDiffer>
    <experiments>2</experiments>
</comment>
<comment type="interaction">
    <interactant intactId="EBI-5844">
        <id>P36009</id>
    </interactant>
    <interactant intactId="EBI-5844">
        <id>P36009</id>
        <label>DHR2</label>
    </interactant>
    <organismsDiffer>false</organismsDiffer>
    <experiments>2</experiments>
</comment>
<comment type="interaction">
    <interactant intactId="EBI-5844">
        <id>P36009</id>
    </interactant>
    <interactant intactId="EBI-6482">
        <id>P38333</id>
        <label>ENP1</label>
    </interactant>
    <organismsDiffer>false</organismsDiffer>
    <experiments>2</experiments>
</comment>
<comment type="interaction">
    <interactant intactId="EBI-5844">
        <id>P36009</id>
    </interactant>
    <interactant intactId="EBI-9243">
        <id>P53941</id>
        <label>IMP4</label>
    </interactant>
    <organismsDiffer>false</organismsDiffer>
    <experiments>2</experiments>
</comment>
<comment type="interaction">
    <interactant intactId="EBI-5844">
        <id>P36009</id>
    </interactant>
    <interactant intactId="EBI-23590">
        <id>P53317</id>
        <label>NOP19</label>
    </interactant>
    <organismsDiffer>false</organismsDiffer>
    <experiments>3</experiments>
</comment>
<comment type="interaction">
    <interactant intactId="EBI-5844">
        <id>P36009</id>
    </interactant>
    <interactant intactId="EBI-505">
        <id>P53131</id>
        <label>PRP43</label>
    </interactant>
    <organismsDiffer>false</organismsDiffer>
    <experiments>2</experiments>
</comment>
<comment type="interaction">
    <interactant intactId="EBI-5844">
        <id>P36009</id>
    </interactant>
    <interactant intactId="EBI-19873">
        <id>P53874</id>
        <label>UBP10</label>
    </interactant>
    <organismsDiffer>false</organismsDiffer>
    <experiments>2</experiments>
</comment>
<comment type="interaction">
    <interactant intactId="EBI-5844">
        <id>P36009</id>
    </interactant>
    <interactant intactId="EBI-4534">
        <id>P40362</id>
        <label>UTP18</label>
    </interactant>
    <organismsDiffer>false</organismsDiffer>
    <experiments>2</experiments>
</comment>
<comment type="interaction">
    <interactant intactId="EBI-5844">
        <id>P36009</id>
    </interactant>
    <interactant intactId="EBI-1878">
        <id>P53254</id>
        <label>UTP22</label>
    </interactant>
    <organismsDiffer>false</organismsDiffer>
    <experiments>3</experiments>
</comment>
<comment type="interaction">
    <interactant intactId="EBI-5844">
        <id>P36009</id>
    </interactant>
    <interactant intactId="EBI-25113">
        <id>P40498</id>
        <label>UTP25</label>
    </interactant>
    <organismsDiffer>false</organismsDiffer>
    <experiments>2</experiments>
</comment>
<comment type="subcellular location">
    <subcellularLocation>
        <location>Nucleus</location>
        <location>Nucleolus</location>
    </subcellularLocation>
</comment>
<comment type="miscellaneous">
    <text evidence="4">Present with 721 molecules/cell in log phase SD medium.</text>
</comment>
<comment type="similarity">
    <text evidence="8">Belongs to the DEAD box helicase family. DEAH subfamily.</text>
</comment>
<name>DHR2_YEAST</name>
<proteinExistence type="evidence at protein level"/>
<keyword id="KW-0067">ATP-binding</keyword>
<keyword id="KW-0347">Helicase</keyword>
<keyword id="KW-0378">Hydrolase</keyword>
<keyword id="KW-0547">Nucleotide-binding</keyword>
<keyword id="KW-0539">Nucleus</keyword>
<keyword id="KW-1185">Reference proteome</keyword>
<keyword id="KW-0694">RNA-binding</keyword>
<keyword id="KW-0698">rRNA processing</keyword>